<keyword id="KW-0479">Metal-binding</keyword>
<keyword id="KW-0539">Nucleus</keyword>
<keyword id="KW-1185">Reference proteome</keyword>
<keyword id="KW-0677">Repeat</keyword>
<keyword id="KW-0862">Zinc</keyword>
<keyword id="KW-0863">Zinc-finger</keyword>
<evidence type="ECO:0000255" key="1">
    <source>
        <dbReference type="PROSITE-ProRule" id="PRU00325"/>
    </source>
</evidence>
<evidence type="ECO:0000256" key="2">
    <source>
        <dbReference type="SAM" id="MobiDB-lite"/>
    </source>
</evidence>
<evidence type="ECO:0000269" key="3">
    <source>
    </source>
</evidence>
<evidence type="ECO:0000305" key="4"/>
<reference key="1">
    <citation type="journal article" date="2000" name="Nature">
        <title>Sequence and analysis of chromosome 3 of the plant Arabidopsis thaliana.</title>
        <authorList>
            <person name="Salanoubat M."/>
            <person name="Lemcke K."/>
            <person name="Rieger M."/>
            <person name="Ansorge W."/>
            <person name="Unseld M."/>
            <person name="Fartmann B."/>
            <person name="Valle G."/>
            <person name="Bloecker H."/>
            <person name="Perez-Alonso M."/>
            <person name="Obermaier B."/>
            <person name="Delseny M."/>
            <person name="Boutry M."/>
            <person name="Grivell L.A."/>
            <person name="Mache R."/>
            <person name="Puigdomenech P."/>
            <person name="De Simone V."/>
            <person name="Choisne N."/>
            <person name="Artiguenave F."/>
            <person name="Robert C."/>
            <person name="Brottier P."/>
            <person name="Wincker P."/>
            <person name="Cattolico L."/>
            <person name="Weissenbach J."/>
            <person name="Saurin W."/>
            <person name="Quetier F."/>
            <person name="Schaefer M."/>
            <person name="Mueller-Auer S."/>
            <person name="Gabel C."/>
            <person name="Fuchs M."/>
            <person name="Benes V."/>
            <person name="Wurmbach E."/>
            <person name="Drzonek H."/>
            <person name="Erfle H."/>
            <person name="Jordan N."/>
            <person name="Bangert S."/>
            <person name="Wiedelmann R."/>
            <person name="Kranz H."/>
            <person name="Voss H."/>
            <person name="Holland R."/>
            <person name="Brandt P."/>
            <person name="Nyakatura G."/>
            <person name="Vezzi A."/>
            <person name="D'Angelo M."/>
            <person name="Pallavicini A."/>
            <person name="Toppo S."/>
            <person name="Simionati B."/>
            <person name="Conrad A."/>
            <person name="Hornischer K."/>
            <person name="Kauer G."/>
            <person name="Loehnert T.-H."/>
            <person name="Nordsiek G."/>
            <person name="Reichelt J."/>
            <person name="Scharfe M."/>
            <person name="Schoen O."/>
            <person name="Bargues M."/>
            <person name="Terol J."/>
            <person name="Climent J."/>
            <person name="Navarro P."/>
            <person name="Collado C."/>
            <person name="Perez-Perez A."/>
            <person name="Ottenwaelder B."/>
            <person name="Duchemin D."/>
            <person name="Cooke R."/>
            <person name="Laudie M."/>
            <person name="Berger-Llauro C."/>
            <person name="Purnelle B."/>
            <person name="Masuy D."/>
            <person name="de Haan M."/>
            <person name="Maarse A.C."/>
            <person name="Alcaraz J.-P."/>
            <person name="Cottet A."/>
            <person name="Casacuberta E."/>
            <person name="Monfort A."/>
            <person name="Argiriou A."/>
            <person name="Flores M."/>
            <person name="Liguori R."/>
            <person name="Vitale D."/>
            <person name="Mannhaupt G."/>
            <person name="Haase D."/>
            <person name="Schoof H."/>
            <person name="Rudd S."/>
            <person name="Zaccaria P."/>
            <person name="Mewes H.-W."/>
            <person name="Mayer K.F.X."/>
            <person name="Kaul S."/>
            <person name="Town C.D."/>
            <person name="Koo H.L."/>
            <person name="Tallon L.J."/>
            <person name="Jenkins J."/>
            <person name="Rooney T."/>
            <person name="Rizzo M."/>
            <person name="Walts A."/>
            <person name="Utterback T."/>
            <person name="Fujii C.Y."/>
            <person name="Shea T.P."/>
            <person name="Creasy T.H."/>
            <person name="Haas B."/>
            <person name="Maiti R."/>
            <person name="Wu D."/>
            <person name="Peterson J."/>
            <person name="Van Aken S."/>
            <person name="Pai G."/>
            <person name="Militscher J."/>
            <person name="Sellers P."/>
            <person name="Gill J.E."/>
            <person name="Feldblyum T.V."/>
            <person name="Preuss D."/>
            <person name="Lin X."/>
            <person name="Nierman W.C."/>
            <person name="Salzberg S.L."/>
            <person name="White O."/>
            <person name="Venter J.C."/>
            <person name="Fraser C.M."/>
            <person name="Kaneko T."/>
            <person name="Nakamura Y."/>
            <person name="Sato S."/>
            <person name="Kato T."/>
            <person name="Asamizu E."/>
            <person name="Sasamoto S."/>
            <person name="Kimura T."/>
            <person name="Idesawa K."/>
            <person name="Kawashima K."/>
            <person name="Kishida Y."/>
            <person name="Kiyokawa C."/>
            <person name="Kohara M."/>
            <person name="Matsumoto M."/>
            <person name="Matsuno A."/>
            <person name="Muraki A."/>
            <person name="Nakayama S."/>
            <person name="Nakazaki N."/>
            <person name="Shinpo S."/>
            <person name="Takeuchi C."/>
            <person name="Wada T."/>
            <person name="Watanabe A."/>
            <person name="Yamada M."/>
            <person name="Yasuda M."/>
            <person name="Tabata S."/>
        </authorList>
    </citation>
    <scope>NUCLEOTIDE SEQUENCE [LARGE SCALE GENOMIC DNA]</scope>
    <source>
        <strain>cv. Columbia</strain>
    </source>
</reference>
<reference key="2">
    <citation type="journal article" date="2017" name="Plant J.">
        <title>Araport11: a complete reannotation of the Arabidopsis thaliana reference genome.</title>
        <authorList>
            <person name="Cheng C.Y."/>
            <person name="Krishnakumar V."/>
            <person name="Chan A.P."/>
            <person name="Thibaud-Nissen F."/>
            <person name="Schobel S."/>
            <person name="Town C.D."/>
        </authorList>
    </citation>
    <scope>GENOME REANNOTATION</scope>
    <source>
        <strain>cv. Columbia</strain>
    </source>
</reference>
<reference key="3">
    <citation type="journal article" date="2003" name="Science">
        <title>Empirical analysis of transcriptional activity in the Arabidopsis genome.</title>
        <authorList>
            <person name="Yamada K."/>
            <person name="Lim J."/>
            <person name="Dale J.M."/>
            <person name="Chen H."/>
            <person name="Shinn P."/>
            <person name="Palm C.J."/>
            <person name="Southwick A.M."/>
            <person name="Wu H.C."/>
            <person name="Kim C.J."/>
            <person name="Nguyen M."/>
            <person name="Pham P.K."/>
            <person name="Cheuk R.F."/>
            <person name="Karlin-Newmann G."/>
            <person name="Liu S.X."/>
            <person name="Lam B."/>
            <person name="Sakano H."/>
            <person name="Wu T."/>
            <person name="Yu G."/>
            <person name="Miranda M."/>
            <person name="Quach H.L."/>
            <person name="Tripp M."/>
            <person name="Chang C.H."/>
            <person name="Lee J.M."/>
            <person name="Toriumi M.J."/>
            <person name="Chan M.M."/>
            <person name="Tang C.C."/>
            <person name="Onodera C.S."/>
            <person name="Deng J.M."/>
            <person name="Akiyama K."/>
            <person name="Ansari Y."/>
            <person name="Arakawa T."/>
            <person name="Banh J."/>
            <person name="Banno F."/>
            <person name="Bowser L."/>
            <person name="Brooks S.Y."/>
            <person name="Carninci P."/>
            <person name="Chao Q."/>
            <person name="Choy N."/>
            <person name="Enju A."/>
            <person name="Goldsmith A.D."/>
            <person name="Gurjal M."/>
            <person name="Hansen N.F."/>
            <person name="Hayashizaki Y."/>
            <person name="Johnson-Hopson C."/>
            <person name="Hsuan V.W."/>
            <person name="Iida K."/>
            <person name="Karnes M."/>
            <person name="Khan S."/>
            <person name="Koesema E."/>
            <person name="Ishida J."/>
            <person name="Jiang P.X."/>
            <person name="Jones T."/>
            <person name="Kawai J."/>
            <person name="Kamiya A."/>
            <person name="Meyers C."/>
            <person name="Nakajima M."/>
            <person name="Narusaka M."/>
            <person name="Seki M."/>
            <person name="Sakurai T."/>
            <person name="Satou M."/>
            <person name="Tamse R."/>
            <person name="Vaysberg M."/>
            <person name="Wallender E.K."/>
            <person name="Wong C."/>
            <person name="Yamamura Y."/>
            <person name="Yuan S."/>
            <person name="Shinozaki K."/>
            <person name="Davis R.W."/>
            <person name="Theologis A."/>
            <person name="Ecker J.R."/>
        </authorList>
    </citation>
    <scope>NUCLEOTIDE SEQUENCE [LARGE SCALE MRNA]</scope>
    <source>
        <strain>cv. Columbia</strain>
    </source>
</reference>
<reference key="4">
    <citation type="journal article" date="2004" name="Plant Physiol.">
        <title>Arabidopsis FHY3/FAR1 gene family and distinct roles of its members in light control of Arabidopsis development.</title>
        <authorList>
            <person name="Lin R."/>
            <person name="Wang H."/>
        </authorList>
    </citation>
    <scope>TISSUE SPECIFICITY</scope>
    <scope>INDUCTION</scope>
    <scope>SUBCELLULAR LOCATION</scope>
    <scope>GENE FAMILY</scope>
    <scope>NOMENCLATURE</scope>
</reference>
<proteinExistence type="evidence at transcript level"/>
<organism>
    <name type="scientific">Arabidopsis thaliana</name>
    <name type="common">Mouse-ear cress</name>
    <dbReference type="NCBI Taxonomy" id="3702"/>
    <lineage>
        <taxon>Eukaryota</taxon>
        <taxon>Viridiplantae</taxon>
        <taxon>Streptophyta</taxon>
        <taxon>Embryophyta</taxon>
        <taxon>Tracheophyta</taxon>
        <taxon>Spermatophyta</taxon>
        <taxon>Magnoliopsida</taxon>
        <taxon>eudicotyledons</taxon>
        <taxon>Gunneridae</taxon>
        <taxon>Pentapetalae</taxon>
        <taxon>rosids</taxon>
        <taxon>malvids</taxon>
        <taxon>Brassicales</taxon>
        <taxon>Brassicaceae</taxon>
        <taxon>Camelineae</taxon>
        <taxon>Arabidopsis</taxon>
    </lineage>
</organism>
<gene>
    <name type="primary">FRS7</name>
    <name type="ordered locus">At3g06250</name>
    <name type="ORF">F28L1.19</name>
</gene>
<feature type="chain" id="PRO_0000363485" description="Protein FAR1-RELATED SEQUENCE 7">
    <location>
        <begin position="1"/>
        <end position="764"/>
    </location>
</feature>
<feature type="domain" description="FAR1 1">
    <location>
        <begin position="42"/>
        <end position="118"/>
    </location>
</feature>
<feature type="domain" description="FAR1 2">
    <location>
        <begin position="204"/>
        <end position="280"/>
    </location>
</feature>
<feature type="domain" description="MULE">
    <location>
        <begin position="375"/>
        <end position="471"/>
    </location>
</feature>
<feature type="zinc finger region" description="SWIM-type" evidence="1">
    <location>
        <begin position="650"/>
        <end position="686"/>
    </location>
</feature>
<feature type="region of interest" description="Disordered" evidence="2">
    <location>
        <begin position="119"/>
        <end position="144"/>
    </location>
</feature>
<feature type="compositionally biased region" description="Polar residues" evidence="2">
    <location>
        <begin position="123"/>
        <end position="133"/>
    </location>
</feature>
<accession>Q9M8J3</accession>
<protein>
    <recommendedName>
        <fullName>Protein FAR1-RELATED SEQUENCE 7</fullName>
    </recommendedName>
</protein>
<comment type="function">
    <text>Putative transcription activator involved in regulating light control of development.</text>
</comment>
<comment type="subcellular location">
    <subcellularLocation>
        <location evidence="3">Nucleus</location>
    </subcellularLocation>
    <text>The nuclear localization is independent of the light treatment.</text>
</comment>
<comment type="tissue specificity">
    <text evidence="3">Expressed in hypocotyls, rosette and cauline leaves, inflorescences stems, flowers and siliques.</text>
</comment>
<comment type="induction">
    <text evidence="3">Up-regulated in hypocotyls by far-red light treatment.</text>
</comment>
<comment type="similarity">
    <text evidence="4">Belongs to the FHY3/FAR1 family.</text>
</comment>
<dbReference type="EMBL" id="AC018907">
    <property type="protein sequence ID" value="AAF30318.1"/>
    <property type="molecule type" value="Genomic_DNA"/>
</dbReference>
<dbReference type="EMBL" id="CP002686">
    <property type="protein sequence ID" value="AEE74365.1"/>
    <property type="molecule type" value="Genomic_DNA"/>
</dbReference>
<dbReference type="EMBL" id="CP002686">
    <property type="protein sequence ID" value="ANM63662.1"/>
    <property type="molecule type" value="Genomic_DNA"/>
</dbReference>
<dbReference type="EMBL" id="CP002686">
    <property type="protein sequence ID" value="ANM63663.1"/>
    <property type="molecule type" value="Genomic_DNA"/>
</dbReference>
<dbReference type="EMBL" id="AF360270">
    <property type="protein sequence ID" value="AAK25980.1"/>
    <property type="molecule type" value="mRNA"/>
</dbReference>
<dbReference type="EMBL" id="AY150446">
    <property type="protein sequence ID" value="AAN12887.1"/>
    <property type="molecule type" value="mRNA"/>
</dbReference>
<dbReference type="RefSeq" id="NP_001325737.1">
    <property type="nucleotide sequence ID" value="NM_001337643.1"/>
</dbReference>
<dbReference type="RefSeq" id="NP_001325738.1">
    <property type="nucleotide sequence ID" value="NM_001337642.1"/>
</dbReference>
<dbReference type="RefSeq" id="NP_566278.1">
    <property type="nucleotide sequence ID" value="NM_111500.3"/>
</dbReference>
<dbReference type="FunCoup" id="Q9M8J3">
    <property type="interactions" value="515"/>
</dbReference>
<dbReference type="STRING" id="3702.Q9M8J3"/>
<dbReference type="iPTMnet" id="Q9M8J3"/>
<dbReference type="PaxDb" id="3702-AT3G06250.1"/>
<dbReference type="ProteomicsDB" id="228956"/>
<dbReference type="EnsemblPlants" id="AT3G06250.1">
    <property type="protein sequence ID" value="AT3G06250.1"/>
    <property type="gene ID" value="AT3G06250"/>
</dbReference>
<dbReference type="EnsemblPlants" id="AT3G06250.2">
    <property type="protein sequence ID" value="AT3G06250.2"/>
    <property type="gene ID" value="AT3G06250"/>
</dbReference>
<dbReference type="EnsemblPlants" id="AT3G06250.3">
    <property type="protein sequence ID" value="AT3G06250.3"/>
    <property type="gene ID" value="AT3G06250"/>
</dbReference>
<dbReference type="GeneID" id="819799"/>
<dbReference type="Gramene" id="AT3G06250.1">
    <property type="protein sequence ID" value="AT3G06250.1"/>
    <property type="gene ID" value="AT3G06250"/>
</dbReference>
<dbReference type="Gramene" id="AT3G06250.2">
    <property type="protein sequence ID" value="AT3G06250.2"/>
    <property type="gene ID" value="AT3G06250"/>
</dbReference>
<dbReference type="Gramene" id="AT3G06250.3">
    <property type="protein sequence ID" value="AT3G06250.3"/>
    <property type="gene ID" value="AT3G06250"/>
</dbReference>
<dbReference type="KEGG" id="ath:AT3G06250"/>
<dbReference type="Araport" id="AT3G06250"/>
<dbReference type="TAIR" id="AT3G06250">
    <property type="gene designation" value="FRS7"/>
</dbReference>
<dbReference type="eggNOG" id="ENOG502QVUN">
    <property type="taxonomic scope" value="Eukaryota"/>
</dbReference>
<dbReference type="HOGENOM" id="CLU_008459_7_2_1"/>
<dbReference type="InParanoid" id="Q9M8J3"/>
<dbReference type="OMA" id="CGNENEK"/>
<dbReference type="PhylomeDB" id="Q9M8J3"/>
<dbReference type="PRO" id="PR:Q9M8J3"/>
<dbReference type="Proteomes" id="UP000006548">
    <property type="component" value="Chromosome 3"/>
</dbReference>
<dbReference type="ExpressionAtlas" id="Q9M8J3">
    <property type="expression patterns" value="baseline and differential"/>
</dbReference>
<dbReference type="GO" id="GO:0005634">
    <property type="term" value="C:nucleus"/>
    <property type="evidence" value="ECO:0007669"/>
    <property type="project" value="UniProtKB-SubCell"/>
</dbReference>
<dbReference type="GO" id="GO:0008270">
    <property type="term" value="F:zinc ion binding"/>
    <property type="evidence" value="ECO:0007669"/>
    <property type="project" value="UniProtKB-KW"/>
</dbReference>
<dbReference type="GO" id="GO:0006355">
    <property type="term" value="P:regulation of DNA-templated transcription"/>
    <property type="evidence" value="ECO:0007669"/>
    <property type="project" value="InterPro"/>
</dbReference>
<dbReference type="InterPro" id="IPR004330">
    <property type="entry name" value="FAR1_DNA_bnd_dom"/>
</dbReference>
<dbReference type="InterPro" id="IPR031052">
    <property type="entry name" value="FHY3/FAR1"/>
</dbReference>
<dbReference type="InterPro" id="IPR018289">
    <property type="entry name" value="MULE_transposase_dom"/>
</dbReference>
<dbReference type="InterPro" id="IPR006564">
    <property type="entry name" value="Znf_PMZ"/>
</dbReference>
<dbReference type="InterPro" id="IPR007527">
    <property type="entry name" value="Znf_SWIM"/>
</dbReference>
<dbReference type="PANTHER" id="PTHR31669">
    <property type="entry name" value="PROTEIN FAR1-RELATED SEQUENCE 10-RELATED"/>
    <property type="match status" value="1"/>
</dbReference>
<dbReference type="PANTHER" id="PTHR31669:SF149">
    <property type="entry name" value="PROTEIN FAR1-RELATED SEQUENCE 12-RELATED"/>
    <property type="match status" value="1"/>
</dbReference>
<dbReference type="Pfam" id="PF03101">
    <property type="entry name" value="FAR1"/>
    <property type="match status" value="2"/>
</dbReference>
<dbReference type="Pfam" id="PF10551">
    <property type="entry name" value="MULE"/>
    <property type="match status" value="1"/>
</dbReference>
<dbReference type="Pfam" id="PF04434">
    <property type="entry name" value="SWIM"/>
    <property type="match status" value="1"/>
</dbReference>
<dbReference type="SMART" id="SM00575">
    <property type="entry name" value="ZnF_PMZ"/>
    <property type="match status" value="1"/>
</dbReference>
<dbReference type="PROSITE" id="PS50966">
    <property type="entry name" value="ZF_SWIM"/>
    <property type="match status" value="1"/>
</dbReference>
<name>FRS7_ARATH</name>
<sequence>MVVKTYPLGMVGTNNGIAENEGDSGLEPYVGLEFDTAEEARDYYNSYATRTGFKVRTGQLYRSRTDGTVSSRRFVCSKEGFQLNSRTGCPAFIRVQRRDTGKWVLDQIQKEHNHDLGGHIEEAQTTPRPSVQQRAPAPTKLGISVPHRPKMKVVDEADKGRSCPSGVISFKRFKGAEDSDGQTQPKATEPYAGLEFNSANEACQFYQAYAEVVGFRVRIGQLFRSKVDGSITSRRFVCSKEGFQHPSRMGCGAYMRIKRQDSGGWIVDRLNKDHNHDLEPGKKNAGMKKITDDVTGGLDSVDLIELNDLSNHISSTRENTIGKEWYPVLLDYFQSKQAEDMGFFYAIELDSNGSCMSIFWADSRSRFACSQFGDAVVFDTSYRKGDYSVPFATFIGFNHHRQPVLLGGALVADESKEAFSWLFQTWLRAMSGRRPRSMVADQDLPIQQAVAQVFPGTHHRFSAWQIRSKERENLRSFPNEFKYEYEKCLYQSQTTVEFDTMWSSLVNKYGLRDNMWLREIYEKREKWVPAYLRASFFGGIHVDGTFDPFYGTSLNSLTSLREFISRYEQGLEQRREEERKEDFNSYNLQPFLQTKEPVEEQCRRLYTLTIFRIFQSELAQSYNYLGLKTYEEGAISRFLVRKCGNENEKHAVTFSASNLNASCSCQMFEYEGLLCRHILKVFNLLDIRELPSRYILHRWTKNAEFGFVRDVESGVTSQDLKALMIWSLREAASKYIEFGTSSLEKYKLAYEIMREGGKKLCWQR</sequence>